<feature type="chain" id="PRO_0000302408" description="Glycine cleavage system H protein">
    <location>
        <begin position="1"/>
        <end position="126"/>
    </location>
</feature>
<feature type="domain" description="Lipoyl-binding" evidence="2">
    <location>
        <begin position="22"/>
        <end position="104"/>
    </location>
</feature>
<feature type="modified residue" description="N6-lipoyllysine" evidence="1">
    <location>
        <position position="63"/>
    </location>
</feature>
<dbReference type="EMBL" id="AE015924">
    <property type="protein sequence ID" value="AAQ66080.1"/>
    <property type="molecule type" value="Genomic_DNA"/>
</dbReference>
<dbReference type="RefSeq" id="WP_004584176.1">
    <property type="nucleotide sequence ID" value="NC_002950.2"/>
</dbReference>
<dbReference type="SMR" id="Q7MVT9"/>
<dbReference type="STRING" id="242619.PG_0950"/>
<dbReference type="EnsemblBacteria" id="AAQ66080">
    <property type="protein sequence ID" value="AAQ66080"/>
    <property type="gene ID" value="PG_0950"/>
</dbReference>
<dbReference type="GeneID" id="29256211"/>
<dbReference type="KEGG" id="pgi:PG_0950"/>
<dbReference type="eggNOG" id="COG0509">
    <property type="taxonomic scope" value="Bacteria"/>
</dbReference>
<dbReference type="HOGENOM" id="CLU_097408_2_2_10"/>
<dbReference type="Proteomes" id="UP000000588">
    <property type="component" value="Chromosome"/>
</dbReference>
<dbReference type="GO" id="GO:0005829">
    <property type="term" value="C:cytosol"/>
    <property type="evidence" value="ECO:0007669"/>
    <property type="project" value="TreeGrafter"/>
</dbReference>
<dbReference type="GO" id="GO:0005960">
    <property type="term" value="C:glycine cleavage complex"/>
    <property type="evidence" value="ECO:0007669"/>
    <property type="project" value="InterPro"/>
</dbReference>
<dbReference type="GO" id="GO:0019464">
    <property type="term" value="P:glycine decarboxylation via glycine cleavage system"/>
    <property type="evidence" value="ECO:0007669"/>
    <property type="project" value="UniProtKB-UniRule"/>
</dbReference>
<dbReference type="CDD" id="cd06848">
    <property type="entry name" value="GCS_H"/>
    <property type="match status" value="1"/>
</dbReference>
<dbReference type="Gene3D" id="2.40.50.100">
    <property type="match status" value="1"/>
</dbReference>
<dbReference type="HAMAP" id="MF_00272">
    <property type="entry name" value="GcvH"/>
    <property type="match status" value="1"/>
</dbReference>
<dbReference type="InterPro" id="IPR003016">
    <property type="entry name" value="2-oxoA_DH_lipoyl-BS"/>
</dbReference>
<dbReference type="InterPro" id="IPR000089">
    <property type="entry name" value="Biotin_lipoyl"/>
</dbReference>
<dbReference type="InterPro" id="IPR002930">
    <property type="entry name" value="GCV_H"/>
</dbReference>
<dbReference type="InterPro" id="IPR033753">
    <property type="entry name" value="GCV_H/Fam206"/>
</dbReference>
<dbReference type="InterPro" id="IPR017453">
    <property type="entry name" value="GCV_H_sub"/>
</dbReference>
<dbReference type="InterPro" id="IPR011053">
    <property type="entry name" value="Single_hybrid_motif"/>
</dbReference>
<dbReference type="NCBIfam" id="TIGR00527">
    <property type="entry name" value="gcvH"/>
    <property type="match status" value="1"/>
</dbReference>
<dbReference type="NCBIfam" id="NF002270">
    <property type="entry name" value="PRK01202.1"/>
    <property type="match status" value="1"/>
</dbReference>
<dbReference type="PANTHER" id="PTHR11715">
    <property type="entry name" value="GLYCINE CLEAVAGE SYSTEM H PROTEIN"/>
    <property type="match status" value="1"/>
</dbReference>
<dbReference type="PANTHER" id="PTHR11715:SF3">
    <property type="entry name" value="GLYCINE CLEAVAGE SYSTEM H PROTEIN-RELATED"/>
    <property type="match status" value="1"/>
</dbReference>
<dbReference type="Pfam" id="PF01597">
    <property type="entry name" value="GCV_H"/>
    <property type="match status" value="1"/>
</dbReference>
<dbReference type="SUPFAM" id="SSF51230">
    <property type="entry name" value="Single hybrid motif"/>
    <property type="match status" value="1"/>
</dbReference>
<dbReference type="PROSITE" id="PS50968">
    <property type="entry name" value="BIOTINYL_LIPOYL"/>
    <property type="match status" value="1"/>
</dbReference>
<dbReference type="PROSITE" id="PS00189">
    <property type="entry name" value="LIPOYL"/>
    <property type="match status" value="1"/>
</dbReference>
<accession>Q7MVT9</accession>
<sequence>MKTPAELKYSKDHEWARQEGDVVFIGITDYAQGELGEIVYVDVTTEGETLEADEVFGSIEAVKTVSDLMMPIAGEVLEVNPDLEEQPELVNSDPYGAGWIIKVKAANAADFDNLLSAAEYEKLIAQ</sequence>
<reference key="1">
    <citation type="journal article" date="2003" name="J. Bacteriol.">
        <title>Complete genome sequence of the oral pathogenic bacterium Porphyromonas gingivalis strain W83.</title>
        <authorList>
            <person name="Nelson K.E."/>
            <person name="Fleischmann R.D."/>
            <person name="DeBoy R.T."/>
            <person name="Paulsen I.T."/>
            <person name="Fouts D.E."/>
            <person name="Eisen J.A."/>
            <person name="Daugherty S.C."/>
            <person name="Dodson R.J."/>
            <person name="Durkin A.S."/>
            <person name="Gwinn M.L."/>
            <person name="Haft D.H."/>
            <person name="Kolonay J.F."/>
            <person name="Nelson W.C."/>
            <person name="Mason T.M."/>
            <person name="Tallon L."/>
            <person name="Gray J."/>
            <person name="Granger D."/>
            <person name="Tettelin H."/>
            <person name="Dong H."/>
            <person name="Galvin J.L."/>
            <person name="Duncan M.J."/>
            <person name="Dewhirst F.E."/>
            <person name="Fraser C.M."/>
        </authorList>
    </citation>
    <scope>NUCLEOTIDE SEQUENCE [LARGE SCALE GENOMIC DNA]</scope>
    <source>
        <strain>ATCC BAA-308 / W83</strain>
    </source>
</reference>
<protein>
    <recommendedName>
        <fullName evidence="1">Glycine cleavage system H protein</fullName>
    </recommendedName>
</protein>
<gene>
    <name evidence="1" type="primary">gcvH</name>
    <name type="ordered locus">PG_0950</name>
</gene>
<proteinExistence type="inferred from homology"/>
<comment type="function">
    <text evidence="1">The glycine cleavage system catalyzes the degradation of glycine. The H protein shuttles the methylamine group of glycine from the P protein to the T protein.</text>
</comment>
<comment type="cofactor">
    <cofactor evidence="1">
        <name>(R)-lipoate</name>
        <dbReference type="ChEBI" id="CHEBI:83088"/>
    </cofactor>
    <text evidence="1">Binds 1 lipoyl cofactor covalently.</text>
</comment>
<comment type="subunit">
    <text evidence="1">The glycine cleavage system is composed of four proteins: P, T, L and H.</text>
</comment>
<comment type="similarity">
    <text evidence="1">Belongs to the GcvH family.</text>
</comment>
<organism>
    <name type="scientific">Porphyromonas gingivalis (strain ATCC BAA-308 / W83)</name>
    <dbReference type="NCBI Taxonomy" id="242619"/>
    <lineage>
        <taxon>Bacteria</taxon>
        <taxon>Pseudomonadati</taxon>
        <taxon>Bacteroidota</taxon>
        <taxon>Bacteroidia</taxon>
        <taxon>Bacteroidales</taxon>
        <taxon>Porphyromonadaceae</taxon>
        <taxon>Porphyromonas</taxon>
    </lineage>
</organism>
<evidence type="ECO:0000255" key="1">
    <source>
        <dbReference type="HAMAP-Rule" id="MF_00272"/>
    </source>
</evidence>
<evidence type="ECO:0000255" key="2">
    <source>
        <dbReference type="PROSITE-ProRule" id="PRU01066"/>
    </source>
</evidence>
<name>GCSH_PORGI</name>
<keyword id="KW-0450">Lipoyl</keyword>
<keyword id="KW-1185">Reference proteome</keyword>